<reference key="1">
    <citation type="journal article" date="2002" name="J. Bacteriol.">
        <title>Whole-genome comparison of Mycobacterium tuberculosis clinical and laboratory strains.</title>
        <authorList>
            <person name="Fleischmann R.D."/>
            <person name="Alland D."/>
            <person name="Eisen J.A."/>
            <person name="Carpenter L."/>
            <person name="White O."/>
            <person name="Peterson J.D."/>
            <person name="DeBoy R.T."/>
            <person name="Dodson R.J."/>
            <person name="Gwinn M.L."/>
            <person name="Haft D.H."/>
            <person name="Hickey E.K."/>
            <person name="Kolonay J.F."/>
            <person name="Nelson W.C."/>
            <person name="Umayam L.A."/>
            <person name="Ermolaeva M.D."/>
            <person name="Salzberg S.L."/>
            <person name="Delcher A."/>
            <person name="Utterback T.R."/>
            <person name="Weidman J.F."/>
            <person name="Khouri H.M."/>
            <person name="Gill J."/>
            <person name="Mikula A."/>
            <person name="Bishai W."/>
            <person name="Jacobs W.R. Jr."/>
            <person name="Venter J.C."/>
            <person name="Fraser C.M."/>
        </authorList>
    </citation>
    <scope>NUCLEOTIDE SEQUENCE [LARGE SCALE GENOMIC DNA]</scope>
    <source>
        <strain>CDC 1551 / Oshkosh</strain>
    </source>
</reference>
<name>Y106_MYCTO</name>
<accession>P9WPI4</accession>
<accession>L0T5P5</accession>
<accession>P64691</accession>
<accession>Q10899</accession>
<dbReference type="EMBL" id="AE000516">
    <property type="protein sequence ID" value="AAK44337.1"/>
    <property type="molecule type" value="Genomic_DNA"/>
</dbReference>
<dbReference type="PIR" id="B70752">
    <property type="entry name" value="B70752"/>
</dbReference>
<dbReference type="KEGG" id="mtc:MT0115"/>
<dbReference type="PATRIC" id="fig|83331.31.peg.120"/>
<dbReference type="HOGENOM" id="CLU_017452_2_0_11"/>
<dbReference type="Proteomes" id="UP000001020">
    <property type="component" value="Chromosome"/>
</dbReference>
<dbReference type="Gene3D" id="3.40.50.300">
    <property type="entry name" value="P-loop containing nucleotide triphosphate hydrolases"/>
    <property type="match status" value="1"/>
</dbReference>
<dbReference type="InterPro" id="IPR011629">
    <property type="entry name" value="CobW-like_C"/>
</dbReference>
<dbReference type="InterPro" id="IPR003495">
    <property type="entry name" value="CobW/HypB/UreG_nucleotide-bd"/>
</dbReference>
<dbReference type="InterPro" id="IPR027417">
    <property type="entry name" value="P-loop_NTPase"/>
</dbReference>
<dbReference type="InterPro" id="IPR051927">
    <property type="entry name" value="Zn_Chap_cDPG_Synth"/>
</dbReference>
<dbReference type="NCBIfam" id="NF047431">
    <property type="entry name" value="hiber_recruit"/>
    <property type="match status" value="1"/>
</dbReference>
<dbReference type="PANTHER" id="PTHR43603">
    <property type="entry name" value="COBW DOMAIN-CONTAINING PROTEIN DDB_G0274527"/>
    <property type="match status" value="1"/>
</dbReference>
<dbReference type="PANTHER" id="PTHR43603:SF1">
    <property type="entry name" value="ZINC-REGULATED GTPASE METALLOPROTEIN ACTIVATOR 1"/>
    <property type="match status" value="1"/>
</dbReference>
<dbReference type="Pfam" id="PF02492">
    <property type="entry name" value="cobW"/>
    <property type="match status" value="1"/>
</dbReference>
<dbReference type="Pfam" id="PF07683">
    <property type="entry name" value="CobW_C"/>
    <property type="match status" value="1"/>
</dbReference>
<dbReference type="SMART" id="SM00833">
    <property type="entry name" value="CobW_C"/>
    <property type="match status" value="1"/>
</dbReference>
<dbReference type="SUPFAM" id="SSF90002">
    <property type="entry name" value="Hypothetical protein YjiA, C-terminal domain"/>
    <property type="match status" value="1"/>
</dbReference>
<organism>
    <name type="scientific">Mycobacterium tuberculosis (strain CDC 1551 / Oshkosh)</name>
    <dbReference type="NCBI Taxonomy" id="83331"/>
    <lineage>
        <taxon>Bacteria</taxon>
        <taxon>Bacillati</taxon>
        <taxon>Actinomycetota</taxon>
        <taxon>Actinomycetes</taxon>
        <taxon>Mycobacteriales</taxon>
        <taxon>Mycobacteriaceae</taxon>
        <taxon>Mycobacterium</taxon>
        <taxon>Mycobacterium tuberculosis complex</taxon>
    </lineage>
</organism>
<feature type="chain" id="PRO_0000426946" description="Uncharacterized protein MT0115">
    <location>
        <begin position="1"/>
        <end position="398"/>
    </location>
</feature>
<feature type="domain" description="CobW C-terminal">
    <location>
        <begin position="235"/>
        <end position="351"/>
    </location>
</feature>
<gene>
    <name type="ordered locus">MT0115</name>
</gene>
<proteinExistence type="predicted"/>
<keyword id="KW-1185">Reference proteome</keyword>
<sequence length="398" mass="43700">MRTPVILVAGQDHTDEVTGALLRRTGTVVVEHRFDGHVVRRMTATLSRGELITTEDALEFAHGCVSCTIRDDLLVLLRRLHRRDNVGRIVVHLAPWLEPQPICWAIDHVRVCVGHGYPDGPAALDVRVAAVVTCVDCVRWLPQSLGEDELPDGRTVAQVTVGQAEFADLLVLTHPEPVAVAVLRRLAPRARITGGVDRVELALAHLDDNSRRGRTDTPHTPLLAGLPPLAADGEVAIVEFSARRPFHPQRLHAAVDLLLDGVVRTRGRLWLANRPDQVMWLESAGGGLRVASAGKWLAAMAASEVAYVDLERRLFADLMWVYPFGDRHTAMTVLVCGADPTDIVNALNAALLSDDEMASPQRWQSYVDPFGDWHDDPCHEMPDAAGEFSAHRNSGESR</sequence>
<protein>
    <recommendedName>
        <fullName>Uncharacterized protein MT0115</fullName>
    </recommendedName>
</protein>